<accession>B8DTI9</accession>
<name>ENO_BIFA0</name>
<evidence type="ECO:0000255" key="1">
    <source>
        <dbReference type="HAMAP-Rule" id="MF_00318"/>
    </source>
</evidence>
<dbReference type="EC" id="4.2.1.11" evidence="1"/>
<dbReference type="EMBL" id="CP001213">
    <property type="protein sequence ID" value="ACL29318.1"/>
    <property type="molecule type" value="Genomic_DNA"/>
</dbReference>
<dbReference type="RefSeq" id="WP_004269110.1">
    <property type="nucleotide sequence ID" value="NC_011835.1"/>
</dbReference>
<dbReference type="SMR" id="B8DTI9"/>
<dbReference type="STRING" id="442563.BLA_1030"/>
<dbReference type="GeneID" id="29695952"/>
<dbReference type="KEGG" id="bla:BLA_1030"/>
<dbReference type="HOGENOM" id="CLU_031223_2_1_11"/>
<dbReference type="UniPathway" id="UPA00109">
    <property type="reaction ID" value="UER00187"/>
</dbReference>
<dbReference type="Proteomes" id="UP000002456">
    <property type="component" value="Chromosome"/>
</dbReference>
<dbReference type="GO" id="GO:0009986">
    <property type="term" value="C:cell surface"/>
    <property type="evidence" value="ECO:0007669"/>
    <property type="project" value="UniProtKB-SubCell"/>
</dbReference>
<dbReference type="GO" id="GO:0005576">
    <property type="term" value="C:extracellular region"/>
    <property type="evidence" value="ECO:0007669"/>
    <property type="project" value="UniProtKB-SubCell"/>
</dbReference>
<dbReference type="GO" id="GO:0000015">
    <property type="term" value="C:phosphopyruvate hydratase complex"/>
    <property type="evidence" value="ECO:0007669"/>
    <property type="project" value="InterPro"/>
</dbReference>
<dbReference type="GO" id="GO:0000287">
    <property type="term" value="F:magnesium ion binding"/>
    <property type="evidence" value="ECO:0007669"/>
    <property type="project" value="UniProtKB-UniRule"/>
</dbReference>
<dbReference type="GO" id="GO:0004634">
    <property type="term" value="F:phosphopyruvate hydratase activity"/>
    <property type="evidence" value="ECO:0007669"/>
    <property type="project" value="UniProtKB-UniRule"/>
</dbReference>
<dbReference type="GO" id="GO:0006096">
    <property type="term" value="P:glycolytic process"/>
    <property type="evidence" value="ECO:0007669"/>
    <property type="project" value="UniProtKB-UniRule"/>
</dbReference>
<dbReference type="CDD" id="cd03313">
    <property type="entry name" value="enolase"/>
    <property type="match status" value="1"/>
</dbReference>
<dbReference type="FunFam" id="3.20.20.120:FF:000001">
    <property type="entry name" value="Enolase"/>
    <property type="match status" value="1"/>
</dbReference>
<dbReference type="FunFam" id="3.30.390.10:FF:000001">
    <property type="entry name" value="Enolase"/>
    <property type="match status" value="1"/>
</dbReference>
<dbReference type="Gene3D" id="3.20.20.120">
    <property type="entry name" value="Enolase-like C-terminal domain"/>
    <property type="match status" value="1"/>
</dbReference>
<dbReference type="Gene3D" id="3.30.390.10">
    <property type="entry name" value="Enolase-like, N-terminal domain"/>
    <property type="match status" value="1"/>
</dbReference>
<dbReference type="HAMAP" id="MF_00318">
    <property type="entry name" value="Enolase"/>
    <property type="match status" value="1"/>
</dbReference>
<dbReference type="InterPro" id="IPR000941">
    <property type="entry name" value="Enolase"/>
</dbReference>
<dbReference type="InterPro" id="IPR036849">
    <property type="entry name" value="Enolase-like_C_sf"/>
</dbReference>
<dbReference type="InterPro" id="IPR029017">
    <property type="entry name" value="Enolase-like_N"/>
</dbReference>
<dbReference type="InterPro" id="IPR020810">
    <property type="entry name" value="Enolase_C"/>
</dbReference>
<dbReference type="InterPro" id="IPR020809">
    <property type="entry name" value="Enolase_CS"/>
</dbReference>
<dbReference type="InterPro" id="IPR020811">
    <property type="entry name" value="Enolase_N"/>
</dbReference>
<dbReference type="NCBIfam" id="TIGR01060">
    <property type="entry name" value="eno"/>
    <property type="match status" value="1"/>
</dbReference>
<dbReference type="PANTHER" id="PTHR11902">
    <property type="entry name" value="ENOLASE"/>
    <property type="match status" value="1"/>
</dbReference>
<dbReference type="PANTHER" id="PTHR11902:SF1">
    <property type="entry name" value="ENOLASE"/>
    <property type="match status" value="1"/>
</dbReference>
<dbReference type="Pfam" id="PF00113">
    <property type="entry name" value="Enolase_C"/>
    <property type="match status" value="1"/>
</dbReference>
<dbReference type="Pfam" id="PF03952">
    <property type="entry name" value="Enolase_N"/>
    <property type="match status" value="1"/>
</dbReference>
<dbReference type="PIRSF" id="PIRSF001400">
    <property type="entry name" value="Enolase"/>
    <property type="match status" value="1"/>
</dbReference>
<dbReference type="PRINTS" id="PR00148">
    <property type="entry name" value="ENOLASE"/>
</dbReference>
<dbReference type="SFLD" id="SFLDF00002">
    <property type="entry name" value="enolase"/>
    <property type="match status" value="1"/>
</dbReference>
<dbReference type="SFLD" id="SFLDG00178">
    <property type="entry name" value="enolase"/>
    <property type="match status" value="1"/>
</dbReference>
<dbReference type="SMART" id="SM01192">
    <property type="entry name" value="Enolase_C"/>
    <property type="match status" value="1"/>
</dbReference>
<dbReference type="SMART" id="SM01193">
    <property type="entry name" value="Enolase_N"/>
    <property type="match status" value="1"/>
</dbReference>
<dbReference type="SUPFAM" id="SSF51604">
    <property type="entry name" value="Enolase C-terminal domain-like"/>
    <property type="match status" value="1"/>
</dbReference>
<dbReference type="SUPFAM" id="SSF54826">
    <property type="entry name" value="Enolase N-terminal domain-like"/>
    <property type="match status" value="1"/>
</dbReference>
<dbReference type="PROSITE" id="PS00164">
    <property type="entry name" value="ENOLASE"/>
    <property type="match status" value="1"/>
</dbReference>
<gene>
    <name evidence="1" type="primary">eno</name>
    <name type="ordered locus">BLA_1030</name>
</gene>
<keyword id="KW-0963">Cytoplasm</keyword>
<keyword id="KW-0324">Glycolysis</keyword>
<keyword id="KW-0456">Lyase</keyword>
<keyword id="KW-0460">Magnesium</keyword>
<keyword id="KW-0479">Metal-binding</keyword>
<keyword id="KW-1185">Reference proteome</keyword>
<keyword id="KW-0964">Secreted</keyword>
<comment type="function">
    <text evidence="1">Catalyzes the reversible conversion of 2-phosphoglycerate (2-PG) into phosphoenolpyruvate (PEP). It is essential for the degradation of carbohydrates via glycolysis.</text>
</comment>
<comment type="catalytic activity">
    <reaction evidence="1">
        <text>(2R)-2-phosphoglycerate = phosphoenolpyruvate + H2O</text>
        <dbReference type="Rhea" id="RHEA:10164"/>
        <dbReference type="ChEBI" id="CHEBI:15377"/>
        <dbReference type="ChEBI" id="CHEBI:58289"/>
        <dbReference type="ChEBI" id="CHEBI:58702"/>
        <dbReference type="EC" id="4.2.1.11"/>
    </reaction>
</comment>
<comment type="cofactor">
    <cofactor evidence="1">
        <name>Mg(2+)</name>
        <dbReference type="ChEBI" id="CHEBI:18420"/>
    </cofactor>
    <text evidence="1">Binds a second Mg(2+) ion via substrate during catalysis.</text>
</comment>
<comment type="pathway">
    <text evidence="1">Carbohydrate degradation; glycolysis; pyruvate from D-glyceraldehyde 3-phosphate: step 4/5.</text>
</comment>
<comment type="subcellular location">
    <subcellularLocation>
        <location evidence="1">Cytoplasm</location>
    </subcellularLocation>
    <subcellularLocation>
        <location evidence="1">Secreted</location>
    </subcellularLocation>
    <subcellularLocation>
        <location evidence="1">Cell surface</location>
    </subcellularLocation>
    <text evidence="1">Fractions of enolase are present in both the cytoplasm and on the cell surface.</text>
</comment>
<comment type="similarity">
    <text evidence="1">Belongs to the enolase family.</text>
</comment>
<reference key="1">
    <citation type="journal article" date="2009" name="J. Bacteriol.">
        <title>Genome sequence of the probiotic bacterium Bifidobacterium animalis subsp. lactis AD011.</title>
        <authorList>
            <person name="Kim J.F."/>
            <person name="Jeong H."/>
            <person name="Yu D.S."/>
            <person name="Choi S.-H."/>
            <person name="Hur C.-G."/>
            <person name="Park M.-S."/>
            <person name="Yoon S.H."/>
            <person name="Kim D.-W."/>
            <person name="Ji G.E."/>
            <person name="Park H.-S."/>
            <person name="Oh T.K."/>
        </authorList>
    </citation>
    <scope>NUCLEOTIDE SEQUENCE [LARGE SCALE GENOMIC DNA]</scope>
    <source>
        <strain>AD011</strain>
    </source>
</reference>
<feature type="chain" id="PRO_1000132985" description="Enolase">
    <location>
        <begin position="1"/>
        <end position="430"/>
    </location>
</feature>
<feature type="active site" description="Proton donor" evidence="1">
    <location>
        <position position="205"/>
    </location>
</feature>
<feature type="active site" description="Proton acceptor" evidence="1">
    <location>
        <position position="337"/>
    </location>
</feature>
<feature type="binding site" evidence="1">
    <location>
        <position position="163"/>
    </location>
    <ligand>
        <name>(2R)-2-phosphoglycerate</name>
        <dbReference type="ChEBI" id="CHEBI:58289"/>
    </ligand>
</feature>
<feature type="binding site" evidence="1">
    <location>
        <position position="242"/>
    </location>
    <ligand>
        <name>Mg(2+)</name>
        <dbReference type="ChEBI" id="CHEBI:18420"/>
    </ligand>
</feature>
<feature type="binding site" evidence="1">
    <location>
        <position position="285"/>
    </location>
    <ligand>
        <name>Mg(2+)</name>
        <dbReference type="ChEBI" id="CHEBI:18420"/>
    </ligand>
</feature>
<feature type="binding site" evidence="1">
    <location>
        <position position="312"/>
    </location>
    <ligand>
        <name>Mg(2+)</name>
        <dbReference type="ChEBI" id="CHEBI:18420"/>
    </ligand>
</feature>
<feature type="binding site" evidence="1">
    <location>
        <position position="337"/>
    </location>
    <ligand>
        <name>(2R)-2-phosphoglycerate</name>
        <dbReference type="ChEBI" id="CHEBI:58289"/>
    </ligand>
</feature>
<feature type="binding site" evidence="1">
    <location>
        <position position="366"/>
    </location>
    <ligand>
        <name>(2R)-2-phosphoglycerate</name>
        <dbReference type="ChEBI" id="CHEBI:58289"/>
    </ligand>
</feature>
<feature type="binding site" evidence="1">
    <location>
        <position position="367"/>
    </location>
    <ligand>
        <name>(2R)-2-phosphoglycerate</name>
        <dbReference type="ChEBI" id="CHEBI:58289"/>
    </ligand>
</feature>
<feature type="binding site" evidence="1">
    <location>
        <position position="388"/>
    </location>
    <ligand>
        <name>(2R)-2-phosphoglycerate</name>
        <dbReference type="ChEBI" id="CHEBI:58289"/>
    </ligand>
</feature>
<proteinExistence type="inferred from homology"/>
<organism>
    <name type="scientific">Bifidobacterium animalis subsp. lactis (strain AD011)</name>
    <dbReference type="NCBI Taxonomy" id="442563"/>
    <lineage>
        <taxon>Bacteria</taxon>
        <taxon>Bacillati</taxon>
        <taxon>Actinomycetota</taxon>
        <taxon>Actinomycetes</taxon>
        <taxon>Bifidobacteriales</taxon>
        <taxon>Bifidobacteriaceae</taxon>
        <taxon>Bifidobacterium</taxon>
    </lineage>
</organism>
<sequence length="430" mass="46461">MAAIESVYARQILDSRGNPTVEVVLDTDDGARGLGLVPSGASTGEAEAWERRDGDKSVYQGKGVLGAVKAVNEEIAPKVIGMDATDQRALDDLMIELDGTPNKGRLGANAILGVSLAALYAAAESAELPLYRYIGGTNGHVLPVPNMNIMNGGAHADFATDIQEYMISPYGFQTYSEALQAGVEVYHTLKNVLKKQGLATGLGDEGGFAPKMKTNEDSLKYIMDAISAAGYEPGKQIGIALDVASSEFYNKETGKYHFDGEDRDSEYMLDFYEKLVDQFPIVSIEDPFQEEGWEDWAKITKALGDRLQFVGDDLFVTNPVRLKKGIDMGAGNSLLVKLNQIGTVSETLDAIELATKNGFTSMVSHRSGETPDTTISDLAVAKNTGQIKTGAPARGERIAKYNRLLEIEEELGSTAEYAGYSAFKACRKYM</sequence>
<protein>
    <recommendedName>
        <fullName evidence="1">Enolase</fullName>
        <ecNumber evidence="1">4.2.1.11</ecNumber>
    </recommendedName>
    <alternativeName>
        <fullName evidence="1">2-phospho-D-glycerate hydro-lyase</fullName>
    </alternativeName>
    <alternativeName>
        <fullName evidence="1">2-phosphoglycerate dehydratase</fullName>
    </alternativeName>
</protein>